<accession>Q7U4H2</accession>
<gene>
    <name evidence="1" type="primary">prfA</name>
    <name type="synonym">sueB</name>
    <name type="ordered locus">SYNW2096</name>
</gene>
<protein>
    <recommendedName>
        <fullName evidence="1">Peptide chain release factor 1</fullName>
        <shortName evidence="1">RF-1</shortName>
    </recommendedName>
</protein>
<keyword id="KW-0963">Cytoplasm</keyword>
<keyword id="KW-0488">Methylation</keyword>
<keyword id="KW-0648">Protein biosynthesis</keyword>
<proteinExistence type="inferred from homology"/>
<reference key="1">
    <citation type="journal article" date="2003" name="Nature">
        <title>The genome of a motile marine Synechococcus.</title>
        <authorList>
            <person name="Palenik B."/>
            <person name="Brahamsha B."/>
            <person name="Larimer F.W."/>
            <person name="Land M.L."/>
            <person name="Hauser L."/>
            <person name="Chain P."/>
            <person name="Lamerdin J.E."/>
            <person name="Regala W."/>
            <person name="Allen E.E."/>
            <person name="McCarren J."/>
            <person name="Paulsen I.T."/>
            <person name="Dufresne A."/>
            <person name="Partensky F."/>
            <person name="Webb E.A."/>
            <person name="Waterbury J."/>
        </authorList>
    </citation>
    <scope>NUCLEOTIDE SEQUENCE [LARGE SCALE GENOMIC DNA]</scope>
    <source>
        <strain>WH8102</strain>
    </source>
</reference>
<dbReference type="EMBL" id="BX569694">
    <property type="protein sequence ID" value="CAE08611.1"/>
    <property type="molecule type" value="Genomic_DNA"/>
</dbReference>
<dbReference type="RefSeq" id="WP_011128953.1">
    <property type="nucleotide sequence ID" value="NC_005070.1"/>
</dbReference>
<dbReference type="SMR" id="Q7U4H2"/>
<dbReference type="STRING" id="84588.SYNW2096"/>
<dbReference type="KEGG" id="syw:SYNW2096"/>
<dbReference type="eggNOG" id="COG0216">
    <property type="taxonomic scope" value="Bacteria"/>
</dbReference>
<dbReference type="HOGENOM" id="CLU_036856_0_1_3"/>
<dbReference type="Proteomes" id="UP000001422">
    <property type="component" value="Chromosome"/>
</dbReference>
<dbReference type="GO" id="GO:0005737">
    <property type="term" value="C:cytoplasm"/>
    <property type="evidence" value="ECO:0007669"/>
    <property type="project" value="UniProtKB-SubCell"/>
</dbReference>
<dbReference type="GO" id="GO:0016149">
    <property type="term" value="F:translation release factor activity, codon specific"/>
    <property type="evidence" value="ECO:0007669"/>
    <property type="project" value="UniProtKB-UniRule"/>
</dbReference>
<dbReference type="FunFam" id="3.30.160.20:FF:000004">
    <property type="entry name" value="Peptide chain release factor 1"/>
    <property type="match status" value="1"/>
</dbReference>
<dbReference type="FunFam" id="3.30.70.1660:FF:000002">
    <property type="entry name" value="Peptide chain release factor 1"/>
    <property type="match status" value="1"/>
</dbReference>
<dbReference type="Gene3D" id="3.30.160.20">
    <property type="match status" value="1"/>
</dbReference>
<dbReference type="Gene3D" id="3.30.70.1660">
    <property type="match status" value="1"/>
</dbReference>
<dbReference type="Gene3D" id="6.10.140.1950">
    <property type="match status" value="1"/>
</dbReference>
<dbReference type="HAMAP" id="MF_00093">
    <property type="entry name" value="Rel_fac_1"/>
    <property type="match status" value="1"/>
</dbReference>
<dbReference type="InterPro" id="IPR005139">
    <property type="entry name" value="PCRF"/>
</dbReference>
<dbReference type="InterPro" id="IPR000352">
    <property type="entry name" value="Pep_chain_release_fac_I"/>
</dbReference>
<dbReference type="InterPro" id="IPR045853">
    <property type="entry name" value="Pep_chain_release_fac_I_sf"/>
</dbReference>
<dbReference type="InterPro" id="IPR050057">
    <property type="entry name" value="Prokaryotic/Mito_RF"/>
</dbReference>
<dbReference type="InterPro" id="IPR004373">
    <property type="entry name" value="RF-1"/>
</dbReference>
<dbReference type="NCBIfam" id="TIGR00019">
    <property type="entry name" value="prfA"/>
    <property type="match status" value="1"/>
</dbReference>
<dbReference type="NCBIfam" id="NF001859">
    <property type="entry name" value="PRK00591.1"/>
    <property type="match status" value="1"/>
</dbReference>
<dbReference type="PANTHER" id="PTHR43804">
    <property type="entry name" value="LD18447P"/>
    <property type="match status" value="1"/>
</dbReference>
<dbReference type="PANTHER" id="PTHR43804:SF8">
    <property type="entry name" value="PEPTIDE CHAIN RELEASE FACTOR APG3, CHLOROPLASTIC"/>
    <property type="match status" value="1"/>
</dbReference>
<dbReference type="Pfam" id="PF03462">
    <property type="entry name" value="PCRF"/>
    <property type="match status" value="1"/>
</dbReference>
<dbReference type="Pfam" id="PF00472">
    <property type="entry name" value="RF-1"/>
    <property type="match status" value="1"/>
</dbReference>
<dbReference type="SMART" id="SM00937">
    <property type="entry name" value="PCRF"/>
    <property type="match status" value="1"/>
</dbReference>
<dbReference type="SUPFAM" id="SSF75620">
    <property type="entry name" value="Release factor"/>
    <property type="match status" value="1"/>
</dbReference>
<dbReference type="PROSITE" id="PS00745">
    <property type="entry name" value="RF_PROK_I"/>
    <property type="match status" value="1"/>
</dbReference>
<sequence length="365" mass="40738">MDASTLLARLEAATASFRNLERQLADPDVAADPTRLEKIARERARLEPLVLDFEELQVLEGEQKQSRELLKECRGDAAMEELAQDDLASLNRRHAELTEKLTVALLPRDPRDERSVMLEIRAGAGGDEACIWAGDLARMYERYSQKLGWNVQPISSNEADLGGFRELILSVKGDSVFSQLKFEAGVHRVQRVPATESQGRVHTSTATVAVMPEADAVEVQLDPKDLEISTARSGGAGGQNVNKVETAVDLLHKPSGIRVFCTQERSQLQNRERALEILRAKLLEQEQREAAARESSDRRAQVGSGDRSEKIRTYNYKDNRTTDHRLGRNFSLDPVLDGQLEDLIGACIAEEQRQKLEALSQQNED</sequence>
<name>RF1_PARMW</name>
<evidence type="ECO:0000255" key="1">
    <source>
        <dbReference type="HAMAP-Rule" id="MF_00093"/>
    </source>
</evidence>
<evidence type="ECO:0000256" key="2">
    <source>
        <dbReference type="SAM" id="MobiDB-lite"/>
    </source>
</evidence>
<organism>
    <name type="scientific">Parasynechococcus marenigrum (strain WH8102)</name>
    <dbReference type="NCBI Taxonomy" id="84588"/>
    <lineage>
        <taxon>Bacteria</taxon>
        <taxon>Bacillati</taxon>
        <taxon>Cyanobacteriota</taxon>
        <taxon>Cyanophyceae</taxon>
        <taxon>Synechococcales</taxon>
        <taxon>Prochlorococcaceae</taxon>
        <taxon>Parasynechococcus</taxon>
        <taxon>Parasynechococcus marenigrum</taxon>
    </lineage>
</organism>
<feature type="chain" id="PRO_0000177759" description="Peptide chain release factor 1">
    <location>
        <begin position="1"/>
        <end position="365"/>
    </location>
</feature>
<feature type="region of interest" description="Disordered" evidence="2">
    <location>
        <begin position="289"/>
        <end position="316"/>
    </location>
</feature>
<feature type="modified residue" description="N5-methylglutamine" evidence="1">
    <location>
        <position position="239"/>
    </location>
</feature>
<comment type="function">
    <text evidence="1">Peptide chain release factor 1 directs the termination of translation in response to the peptide chain termination codons UAG and UAA.</text>
</comment>
<comment type="subcellular location">
    <subcellularLocation>
        <location evidence="1">Cytoplasm</location>
    </subcellularLocation>
</comment>
<comment type="PTM">
    <text evidence="1">Methylated by PrmC. Methylation increases the termination efficiency of RF1.</text>
</comment>
<comment type="similarity">
    <text evidence="1">Belongs to the prokaryotic/mitochondrial release factor family.</text>
</comment>